<organism>
    <name type="scientific">Clostridium kluyveri (strain ATCC 8527 / DSM 555 / NBRC 12016 / NCIMB 10680 / K1)</name>
    <dbReference type="NCBI Taxonomy" id="431943"/>
    <lineage>
        <taxon>Bacteria</taxon>
        <taxon>Bacillati</taxon>
        <taxon>Bacillota</taxon>
        <taxon>Clostridia</taxon>
        <taxon>Eubacteriales</taxon>
        <taxon>Clostridiaceae</taxon>
        <taxon>Clostridium</taxon>
    </lineage>
</organism>
<gene>
    <name evidence="1" type="primary">rpsP</name>
    <name type="ordered locus">CKL_1402</name>
</gene>
<accession>A5N813</accession>
<reference key="1">
    <citation type="journal article" date="2008" name="Proc. Natl. Acad. Sci. U.S.A.">
        <title>The genome of Clostridium kluyveri, a strict anaerobe with unique metabolic features.</title>
        <authorList>
            <person name="Seedorf H."/>
            <person name="Fricke W.F."/>
            <person name="Veith B."/>
            <person name="Brueggemann H."/>
            <person name="Liesegang H."/>
            <person name="Strittmatter A."/>
            <person name="Miethke M."/>
            <person name="Buckel W."/>
            <person name="Hinderberger J."/>
            <person name="Li F."/>
            <person name="Hagemeier C."/>
            <person name="Thauer R.K."/>
            <person name="Gottschalk G."/>
        </authorList>
    </citation>
    <scope>NUCLEOTIDE SEQUENCE [LARGE SCALE GENOMIC DNA]</scope>
    <source>
        <strain>ATCC 8527 / DSM 555 / NBRC 12016 / NCIMB 10680 / K1</strain>
    </source>
</reference>
<feature type="chain" id="PRO_1000080143" description="Small ribosomal subunit protein bS16">
    <location>
        <begin position="1"/>
        <end position="85"/>
    </location>
</feature>
<comment type="similarity">
    <text evidence="1">Belongs to the bacterial ribosomal protein bS16 family.</text>
</comment>
<proteinExistence type="inferred from homology"/>
<name>RS16_CLOK5</name>
<dbReference type="EMBL" id="CP000673">
    <property type="protein sequence ID" value="EDK33444.1"/>
    <property type="molecule type" value="Genomic_DNA"/>
</dbReference>
<dbReference type="RefSeq" id="WP_012101791.1">
    <property type="nucleotide sequence ID" value="NC_009706.1"/>
</dbReference>
<dbReference type="SMR" id="A5N813"/>
<dbReference type="STRING" id="431943.CKL_1402"/>
<dbReference type="KEGG" id="ckl:CKL_1402"/>
<dbReference type="eggNOG" id="COG0228">
    <property type="taxonomic scope" value="Bacteria"/>
</dbReference>
<dbReference type="HOGENOM" id="CLU_100590_5_0_9"/>
<dbReference type="Proteomes" id="UP000002411">
    <property type="component" value="Chromosome"/>
</dbReference>
<dbReference type="GO" id="GO:0005737">
    <property type="term" value="C:cytoplasm"/>
    <property type="evidence" value="ECO:0007669"/>
    <property type="project" value="UniProtKB-ARBA"/>
</dbReference>
<dbReference type="GO" id="GO:0015935">
    <property type="term" value="C:small ribosomal subunit"/>
    <property type="evidence" value="ECO:0007669"/>
    <property type="project" value="TreeGrafter"/>
</dbReference>
<dbReference type="GO" id="GO:0003735">
    <property type="term" value="F:structural constituent of ribosome"/>
    <property type="evidence" value="ECO:0007669"/>
    <property type="project" value="InterPro"/>
</dbReference>
<dbReference type="GO" id="GO:0006412">
    <property type="term" value="P:translation"/>
    <property type="evidence" value="ECO:0007669"/>
    <property type="project" value="UniProtKB-UniRule"/>
</dbReference>
<dbReference type="FunFam" id="3.30.1320.10:FF:000002">
    <property type="entry name" value="30S ribosomal protein S16"/>
    <property type="match status" value="1"/>
</dbReference>
<dbReference type="Gene3D" id="3.30.1320.10">
    <property type="match status" value="1"/>
</dbReference>
<dbReference type="HAMAP" id="MF_00385">
    <property type="entry name" value="Ribosomal_bS16"/>
    <property type="match status" value="1"/>
</dbReference>
<dbReference type="InterPro" id="IPR000307">
    <property type="entry name" value="Ribosomal_bS16"/>
</dbReference>
<dbReference type="InterPro" id="IPR023803">
    <property type="entry name" value="Ribosomal_bS16_dom_sf"/>
</dbReference>
<dbReference type="NCBIfam" id="TIGR00002">
    <property type="entry name" value="S16"/>
    <property type="match status" value="1"/>
</dbReference>
<dbReference type="PANTHER" id="PTHR12919">
    <property type="entry name" value="30S RIBOSOMAL PROTEIN S16"/>
    <property type="match status" value="1"/>
</dbReference>
<dbReference type="PANTHER" id="PTHR12919:SF20">
    <property type="entry name" value="SMALL RIBOSOMAL SUBUNIT PROTEIN BS16M"/>
    <property type="match status" value="1"/>
</dbReference>
<dbReference type="Pfam" id="PF00886">
    <property type="entry name" value="Ribosomal_S16"/>
    <property type="match status" value="1"/>
</dbReference>
<dbReference type="SUPFAM" id="SSF54565">
    <property type="entry name" value="Ribosomal protein S16"/>
    <property type="match status" value="1"/>
</dbReference>
<protein>
    <recommendedName>
        <fullName evidence="1">Small ribosomal subunit protein bS16</fullName>
    </recommendedName>
    <alternativeName>
        <fullName evidence="2">30S ribosomal protein S16</fullName>
    </alternativeName>
</protein>
<sequence length="85" mass="9738">MAVKIRLRRMGAKKAPFYRIVVADSRSPRDGRFVEEIGYYNPVTEPTIIKFDEEKAVKWIKNGAQPTDIVKKLFDKAGLKDKLGK</sequence>
<keyword id="KW-1185">Reference proteome</keyword>
<keyword id="KW-0687">Ribonucleoprotein</keyword>
<keyword id="KW-0689">Ribosomal protein</keyword>
<evidence type="ECO:0000255" key="1">
    <source>
        <dbReference type="HAMAP-Rule" id="MF_00385"/>
    </source>
</evidence>
<evidence type="ECO:0000305" key="2"/>